<dbReference type="EC" id="2.5.1.141" evidence="1"/>
<dbReference type="EMBL" id="AP009351">
    <property type="protein sequence ID" value="BAF67253.1"/>
    <property type="molecule type" value="Genomic_DNA"/>
</dbReference>
<dbReference type="SMR" id="A6QFX1"/>
<dbReference type="KEGG" id="sae:NWMN_0981"/>
<dbReference type="HOGENOM" id="CLU_029631_0_0_9"/>
<dbReference type="UniPathway" id="UPA00834">
    <property type="reaction ID" value="UER00712"/>
</dbReference>
<dbReference type="Proteomes" id="UP000006386">
    <property type="component" value="Chromosome"/>
</dbReference>
<dbReference type="GO" id="GO:0005886">
    <property type="term" value="C:plasma membrane"/>
    <property type="evidence" value="ECO:0007669"/>
    <property type="project" value="UniProtKB-SubCell"/>
</dbReference>
<dbReference type="GO" id="GO:0008495">
    <property type="term" value="F:protoheme IX farnesyltransferase activity"/>
    <property type="evidence" value="ECO:0007669"/>
    <property type="project" value="UniProtKB-UniRule"/>
</dbReference>
<dbReference type="GO" id="GO:0048034">
    <property type="term" value="P:heme O biosynthetic process"/>
    <property type="evidence" value="ECO:0007669"/>
    <property type="project" value="UniProtKB-UniRule"/>
</dbReference>
<dbReference type="CDD" id="cd13957">
    <property type="entry name" value="PT_UbiA_Cox10"/>
    <property type="match status" value="1"/>
</dbReference>
<dbReference type="Gene3D" id="1.10.357.140">
    <property type="entry name" value="UbiA prenyltransferase"/>
    <property type="match status" value="1"/>
</dbReference>
<dbReference type="HAMAP" id="MF_00154">
    <property type="entry name" value="CyoE_CtaB"/>
    <property type="match status" value="1"/>
</dbReference>
<dbReference type="InterPro" id="IPR006369">
    <property type="entry name" value="Protohaem_IX_farnesylTrfase"/>
</dbReference>
<dbReference type="InterPro" id="IPR000537">
    <property type="entry name" value="UbiA_prenyltransferase"/>
</dbReference>
<dbReference type="InterPro" id="IPR044878">
    <property type="entry name" value="UbiA_sf"/>
</dbReference>
<dbReference type="NCBIfam" id="TIGR01473">
    <property type="entry name" value="cyoE_ctaB"/>
    <property type="match status" value="1"/>
</dbReference>
<dbReference type="PANTHER" id="PTHR43448">
    <property type="entry name" value="PROTOHEME IX FARNESYLTRANSFERASE, MITOCHONDRIAL"/>
    <property type="match status" value="1"/>
</dbReference>
<dbReference type="PANTHER" id="PTHR43448:SF2">
    <property type="entry name" value="PROTOHEME IX FARNESYLTRANSFERASE, MITOCHONDRIAL"/>
    <property type="match status" value="1"/>
</dbReference>
<dbReference type="Pfam" id="PF01040">
    <property type="entry name" value="UbiA"/>
    <property type="match status" value="1"/>
</dbReference>
<protein>
    <recommendedName>
        <fullName evidence="1">Protoheme IX farnesyltransferase</fullName>
        <ecNumber evidence="1">2.5.1.141</ecNumber>
    </recommendedName>
    <alternativeName>
        <fullName evidence="1">Heme B farnesyltransferase</fullName>
    </alternativeName>
    <alternativeName>
        <fullName evidence="1">Heme O synthase</fullName>
    </alternativeName>
</protein>
<gene>
    <name evidence="1" type="primary">ctaB</name>
    <name type="synonym">cyoD</name>
    <name type="ordered locus">NWMN_0981</name>
</gene>
<accession>A6QFX1</accession>
<sequence>MSKEHTLSQNISRVNFKELQQIIKMGLVQGNLIPAFAGAWLAVVMTNHSFLSSIPQILLMLFGSTLIMGGACALNNYYDQDIDRIMPSKQNRPTVNNRITDQNLLLLSFGMMLVGEICLFLLNIPSGVLGLMGIVGYVSYYSIWSKRHTTWNTVIGSFPGAVPPLIGWVAIEGQISLTAIALFLVVFCWQPIHFYALAIKRKDEYALANIPMLPSVKGFKRTRVSMFIWLIILLPVPLLLINLGVVFVVLATLLNLGWIALGLTTFKKNSDQTKWATQMFIYSLNYLVIFFVLAVIVSLLTLI</sequence>
<keyword id="KW-1003">Cell membrane</keyword>
<keyword id="KW-0350">Heme biosynthesis</keyword>
<keyword id="KW-0472">Membrane</keyword>
<keyword id="KW-0808">Transferase</keyword>
<keyword id="KW-0812">Transmembrane</keyword>
<keyword id="KW-1133">Transmembrane helix</keyword>
<evidence type="ECO:0000255" key="1">
    <source>
        <dbReference type="HAMAP-Rule" id="MF_00154"/>
    </source>
</evidence>
<proteinExistence type="inferred from homology"/>
<organism>
    <name type="scientific">Staphylococcus aureus (strain Newman)</name>
    <dbReference type="NCBI Taxonomy" id="426430"/>
    <lineage>
        <taxon>Bacteria</taxon>
        <taxon>Bacillati</taxon>
        <taxon>Bacillota</taxon>
        <taxon>Bacilli</taxon>
        <taxon>Bacillales</taxon>
        <taxon>Staphylococcaceae</taxon>
        <taxon>Staphylococcus</taxon>
    </lineage>
</organism>
<feature type="chain" id="PRO_0000346076" description="Protoheme IX farnesyltransferase">
    <location>
        <begin position="1"/>
        <end position="303"/>
    </location>
</feature>
<feature type="transmembrane region" description="Helical" evidence="1">
    <location>
        <begin position="25"/>
        <end position="45"/>
    </location>
</feature>
<feature type="transmembrane region" description="Helical" evidence="1">
    <location>
        <begin position="54"/>
        <end position="74"/>
    </location>
</feature>
<feature type="transmembrane region" description="Helical" evidence="1">
    <location>
        <begin position="104"/>
        <end position="124"/>
    </location>
</feature>
<feature type="transmembrane region" description="Helical" evidence="1">
    <location>
        <begin position="125"/>
        <end position="145"/>
    </location>
</feature>
<feature type="transmembrane region" description="Helical" evidence="1">
    <location>
        <begin position="151"/>
        <end position="171"/>
    </location>
</feature>
<feature type="transmembrane region" description="Helical" evidence="1">
    <location>
        <begin position="179"/>
        <end position="199"/>
    </location>
</feature>
<feature type="transmembrane region" description="Helical" evidence="1">
    <location>
        <begin position="227"/>
        <end position="247"/>
    </location>
</feature>
<feature type="transmembrane region" description="Helical" evidence="1">
    <location>
        <begin position="248"/>
        <end position="268"/>
    </location>
</feature>
<feature type="transmembrane region" description="Helical" evidence="1">
    <location>
        <begin position="280"/>
        <end position="300"/>
    </location>
</feature>
<reference key="1">
    <citation type="journal article" date="2008" name="J. Bacteriol.">
        <title>Genome sequence of Staphylococcus aureus strain Newman and comparative analysis of staphylococcal genomes: polymorphism and evolution of two major pathogenicity islands.</title>
        <authorList>
            <person name="Baba T."/>
            <person name="Bae T."/>
            <person name="Schneewind O."/>
            <person name="Takeuchi F."/>
            <person name="Hiramatsu K."/>
        </authorList>
    </citation>
    <scope>NUCLEOTIDE SEQUENCE [LARGE SCALE GENOMIC DNA]</scope>
    <source>
        <strain>Newman</strain>
    </source>
</reference>
<name>COXX_STAAE</name>
<comment type="function">
    <text evidence="1">Converts heme B (protoheme IX) to heme O by substitution of the vinyl group on carbon 2 of heme B porphyrin ring with a hydroxyethyl farnesyl side group.</text>
</comment>
<comment type="catalytic activity">
    <reaction evidence="1">
        <text>heme b + (2E,6E)-farnesyl diphosphate + H2O = Fe(II)-heme o + diphosphate</text>
        <dbReference type="Rhea" id="RHEA:28070"/>
        <dbReference type="ChEBI" id="CHEBI:15377"/>
        <dbReference type="ChEBI" id="CHEBI:33019"/>
        <dbReference type="ChEBI" id="CHEBI:60344"/>
        <dbReference type="ChEBI" id="CHEBI:60530"/>
        <dbReference type="ChEBI" id="CHEBI:175763"/>
        <dbReference type="EC" id="2.5.1.141"/>
    </reaction>
</comment>
<comment type="pathway">
    <text evidence="1">Porphyrin-containing compound metabolism; heme O biosynthesis; heme O from protoheme: step 1/1.</text>
</comment>
<comment type="subunit">
    <text evidence="1">Interacts with CtaA.</text>
</comment>
<comment type="subcellular location">
    <subcellularLocation>
        <location evidence="1">Cell membrane</location>
        <topology evidence="1">Multi-pass membrane protein</topology>
    </subcellularLocation>
</comment>
<comment type="miscellaneous">
    <text evidence="1">Carbon 2 of the heme B porphyrin ring is defined according to the Fischer nomenclature.</text>
</comment>
<comment type="similarity">
    <text evidence="1">Belongs to the UbiA prenyltransferase family. Protoheme IX farnesyltransferase subfamily.</text>
</comment>